<keyword id="KW-0687">Ribonucleoprotein</keyword>
<keyword id="KW-0689">Ribosomal protein</keyword>
<accession>P0A2A6</accession>
<accession>O54325</accession>
<comment type="similarity">
    <text evidence="2">Belongs to the bacterial ribosomal protein bL28 family.</text>
</comment>
<reference key="1">
    <citation type="journal article" date="2001" name="Nature">
        <title>Complete genome sequence of a multiple drug resistant Salmonella enterica serovar Typhi CT18.</title>
        <authorList>
            <person name="Parkhill J."/>
            <person name="Dougan G."/>
            <person name="James K.D."/>
            <person name="Thomson N.R."/>
            <person name="Pickard D."/>
            <person name="Wain J."/>
            <person name="Churcher C.M."/>
            <person name="Mungall K.L."/>
            <person name="Bentley S.D."/>
            <person name="Holden M.T.G."/>
            <person name="Sebaihia M."/>
            <person name="Baker S."/>
            <person name="Basham D."/>
            <person name="Brooks K."/>
            <person name="Chillingworth T."/>
            <person name="Connerton P."/>
            <person name="Cronin A."/>
            <person name="Davis P."/>
            <person name="Davies R.M."/>
            <person name="Dowd L."/>
            <person name="White N."/>
            <person name="Farrar J."/>
            <person name="Feltwell T."/>
            <person name="Hamlin N."/>
            <person name="Haque A."/>
            <person name="Hien T.T."/>
            <person name="Holroyd S."/>
            <person name="Jagels K."/>
            <person name="Krogh A."/>
            <person name="Larsen T.S."/>
            <person name="Leather S."/>
            <person name="Moule S."/>
            <person name="O'Gaora P."/>
            <person name="Parry C."/>
            <person name="Quail M.A."/>
            <person name="Rutherford K.M."/>
            <person name="Simmonds M."/>
            <person name="Skelton J."/>
            <person name="Stevens K."/>
            <person name="Whitehead S."/>
            <person name="Barrell B.G."/>
        </authorList>
    </citation>
    <scope>NUCLEOTIDE SEQUENCE [LARGE SCALE GENOMIC DNA]</scope>
    <source>
        <strain>CT18</strain>
    </source>
</reference>
<reference key="2">
    <citation type="journal article" date="2003" name="J. Bacteriol.">
        <title>Comparative genomics of Salmonella enterica serovar Typhi strains Ty2 and CT18.</title>
        <authorList>
            <person name="Deng W."/>
            <person name="Liou S.-R."/>
            <person name="Plunkett G. III"/>
            <person name="Mayhew G.F."/>
            <person name="Rose D.J."/>
            <person name="Burland V."/>
            <person name="Kodoyianni V."/>
            <person name="Schwartz D.C."/>
            <person name="Blattner F.R."/>
        </authorList>
    </citation>
    <scope>NUCLEOTIDE SEQUENCE [LARGE SCALE GENOMIC DNA]</scope>
    <source>
        <strain>ATCC 700931 / Ty2</strain>
    </source>
</reference>
<gene>
    <name type="primary">rpmB</name>
    <name type="ordered locus">STY4066</name>
    <name type="ordered locus">t3790</name>
</gene>
<evidence type="ECO:0000250" key="1"/>
<evidence type="ECO:0000305" key="2"/>
<feature type="initiator methionine" description="Removed" evidence="1">
    <location>
        <position position="1"/>
    </location>
</feature>
<feature type="chain" id="PRO_0000178542" description="Large ribosomal subunit protein bL28">
    <location>
        <begin position="2"/>
        <end position="78"/>
    </location>
</feature>
<sequence length="78" mass="9051">MSRVCQVTGKRPVTGNNRSHALNATKRRFLPNLHSHRFWVESEKRFVTLRVSAKGMRIIDKKGIETVLSELRARGEKY</sequence>
<name>RL28_SALTI</name>
<organism>
    <name type="scientific">Salmonella typhi</name>
    <dbReference type="NCBI Taxonomy" id="90370"/>
    <lineage>
        <taxon>Bacteria</taxon>
        <taxon>Pseudomonadati</taxon>
        <taxon>Pseudomonadota</taxon>
        <taxon>Gammaproteobacteria</taxon>
        <taxon>Enterobacterales</taxon>
        <taxon>Enterobacteriaceae</taxon>
        <taxon>Salmonella</taxon>
    </lineage>
</organism>
<dbReference type="EMBL" id="AL513382">
    <property type="protein sequence ID" value="CAD03265.1"/>
    <property type="molecule type" value="Genomic_DNA"/>
</dbReference>
<dbReference type="EMBL" id="AE014613">
    <property type="protein sequence ID" value="AAO71272.1"/>
    <property type="molecule type" value="Genomic_DNA"/>
</dbReference>
<dbReference type="RefSeq" id="NP_458198.1">
    <property type="nucleotide sequence ID" value="NC_003198.1"/>
</dbReference>
<dbReference type="RefSeq" id="WP_001519051.1">
    <property type="nucleotide sequence ID" value="NZ_WSUR01000001.1"/>
</dbReference>
<dbReference type="SMR" id="P0A2A6"/>
<dbReference type="STRING" id="220341.gene:17587909"/>
<dbReference type="KEGG" id="stt:t3790"/>
<dbReference type="KEGG" id="sty:STY4066"/>
<dbReference type="PATRIC" id="fig|220341.7.peg.4151"/>
<dbReference type="eggNOG" id="COG0227">
    <property type="taxonomic scope" value="Bacteria"/>
</dbReference>
<dbReference type="HOGENOM" id="CLU_064548_3_1_6"/>
<dbReference type="OMA" id="LHTKRIW"/>
<dbReference type="OrthoDB" id="9805609at2"/>
<dbReference type="Proteomes" id="UP000000541">
    <property type="component" value="Chromosome"/>
</dbReference>
<dbReference type="Proteomes" id="UP000002670">
    <property type="component" value="Chromosome"/>
</dbReference>
<dbReference type="GO" id="GO:0022625">
    <property type="term" value="C:cytosolic large ribosomal subunit"/>
    <property type="evidence" value="ECO:0007669"/>
    <property type="project" value="TreeGrafter"/>
</dbReference>
<dbReference type="GO" id="GO:0003735">
    <property type="term" value="F:structural constituent of ribosome"/>
    <property type="evidence" value="ECO:0007669"/>
    <property type="project" value="InterPro"/>
</dbReference>
<dbReference type="GO" id="GO:0006412">
    <property type="term" value="P:translation"/>
    <property type="evidence" value="ECO:0007669"/>
    <property type="project" value="UniProtKB-UniRule"/>
</dbReference>
<dbReference type="FunFam" id="2.30.170.40:FF:000001">
    <property type="entry name" value="50S ribosomal protein L28"/>
    <property type="match status" value="1"/>
</dbReference>
<dbReference type="Gene3D" id="2.30.170.40">
    <property type="entry name" value="Ribosomal protein L28/L24"/>
    <property type="match status" value="1"/>
</dbReference>
<dbReference type="HAMAP" id="MF_00373">
    <property type="entry name" value="Ribosomal_bL28"/>
    <property type="match status" value="1"/>
</dbReference>
<dbReference type="InterPro" id="IPR026569">
    <property type="entry name" value="Ribosomal_bL28"/>
</dbReference>
<dbReference type="InterPro" id="IPR034704">
    <property type="entry name" value="Ribosomal_bL28/bL31-like_sf"/>
</dbReference>
<dbReference type="InterPro" id="IPR001383">
    <property type="entry name" value="Ribosomal_bL28_bact-type"/>
</dbReference>
<dbReference type="InterPro" id="IPR037147">
    <property type="entry name" value="Ribosomal_bL28_sf"/>
</dbReference>
<dbReference type="NCBIfam" id="TIGR00009">
    <property type="entry name" value="L28"/>
    <property type="match status" value="1"/>
</dbReference>
<dbReference type="PANTHER" id="PTHR13528">
    <property type="entry name" value="39S RIBOSOMAL PROTEIN L28, MITOCHONDRIAL"/>
    <property type="match status" value="1"/>
</dbReference>
<dbReference type="PANTHER" id="PTHR13528:SF2">
    <property type="entry name" value="LARGE RIBOSOMAL SUBUNIT PROTEIN BL28M"/>
    <property type="match status" value="1"/>
</dbReference>
<dbReference type="Pfam" id="PF00830">
    <property type="entry name" value="Ribosomal_L28"/>
    <property type="match status" value="1"/>
</dbReference>
<dbReference type="SUPFAM" id="SSF143800">
    <property type="entry name" value="L28p-like"/>
    <property type="match status" value="1"/>
</dbReference>
<protein>
    <recommendedName>
        <fullName evidence="2">Large ribosomal subunit protein bL28</fullName>
    </recommendedName>
    <alternativeName>
        <fullName>50S ribosomal protein L28</fullName>
    </alternativeName>
</protein>
<proteinExistence type="inferred from homology"/>